<sequence length="535" mass="59761">MTKYIFVTGGVVSSLGKGITAASLGRLLKNRGLNVTIQKFDPYINVDPGTMSPYQHGEVFVTDDGAETDLDLGHYERFIDINLNKYSNVTTGKIYSSVLQKERRGEYLGGTVQVIPHITNEIKERVFRAGRETNADVVITEIGGTVGDIESLPFLEAIRQIKSDIGRDNVMYIHCTLIPYLKAAGEMKTKPTQHSVKELRSLGIQPNIIVVRTEMPVSQDMKDKLALFCDIDPKAVIEAADADTLYAVPLSLQEQNMDQIVCDHLKLDNAPADMTEWKALVDKVRNLSKKTRIALVGKYVELQDAYISVVEALRHAGYTFDTDVEVKWVNAEHVTAENVKELVGDTDGILVPGGFGDRGVEGKIVAIQYARENKVPFLGICLGMQLASIEFARNVLGLEGANSSEINPDTPYAIIDLLPEQKDVEDLGGTLRLGLYPCKLTPETNAYRAYNEPVVYERHRHRYEFNNQFRQEMENAGFIFSGTSPDGRLVEIVELQDHPWFVAAQFHPELVSRPNRPQPLFRDFVQASITNKESK</sequence>
<comment type="function">
    <text evidence="1">Catalyzes the ATP-dependent amination of UTP to CTP with either L-glutamine or ammonia as the source of nitrogen. Regulates intracellular CTP levels through interactions with the four ribonucleotide triphosphates.</text>
</comment>
<comment type="catalytic activity">
    <reaction evidence="1">
        <text>UTP + L-glutamine + ATP + H2O = CTP + L-glutamate + ADP + phosphate + 2 H(+)</text>
        <dbReference type="Rhea" id="RHEA:26426"/>
        <dbReference type="ChEBI" id="CHEBI:15377"/>
        <dbReference type="ChEBI" id="CHEBI:15378"/>
        <dbReference type="ChEBI" id="CHEBI:29985"/>
        <dbReference type="ChEBI" id="CHEBI:30616"/>
        <dbReference type="ChEBI" id="CHEBI:37563"/>
        <dbReference type="ChEBI" id="CHEBI:43474"/>
        <dbReference type="ChEBI" id="CHEBI:46398"/>
        <dbReference type="ChEBI" id="CHEBI:58359"/>
        <dbReference type="ChEBI" id="CHEBI:456216"/>
        <dbReference type="EC" id="6.3.4.2"/>
    </reaction>
</comment>
<comment type="catalytic activity">
    <reaction evidence="1">
        <text>L-glutamine + H2O = L-glutamate + NH4(+)</text>
        <dbReference type="Rhea" id="RHEA:15889"/>
        <dbReference type="ChEBI" id="CHEBI:15377"/>
        <dbReference type="ChEBI" id="CHEBI:28938"/>
        <dbReference type="ChEBI" id="CHEBI:29985"/>
        <dbReference type="ChEBI" id="CHEBI:58359"/>
    </reaction>
</comment>
<comment type="catalytic activity">
    <reaction evidence="1">
        <text>UTP + NH4(+) + ATP = CTP + ADP + phosphate + 2 H(+)</text>
        <dbReference type="Rhea" id="RHEA:16597"/>
        <dbReference type="ChEBI" id="CHEBI:15378"/>
        <dbReference type="ChEBI" id="CHEBI:28938"/>
        <dbReference type="ChEBI" id="CHEBI:30616"/>
        <dbReference type="ChEBI" id="CHEBI:37563"/>
        <dbReference type="ChEBI" id="CHEBI:43474"/>
        <dbReference type="ChEBI" id="CHEBI:46398"/>
        <dbReference type="ChEBI" id="CHEBI:456216"/>
    </reaction>
</comment>
<comment type="activity regulation">
    <text evidence="1">Allosterically activated by GTP, when glutamine is the substrate; GTP has no effect on the reaction when ammonia is the substrate. The allosteric effector GTP functions by stabilizing the protein conformation that binds the tetrahedral intermediate(s) formed during glutamine hydrolysis. Inhibited by the product CTP, via allosteric rather than competitive inhibition.</text>
</comment>
<comment type="pathway">
    <text evidence="1">Pyrimidine metabolism; CTP biosynthesis via de novo pathway; CTP from UDP: step 2/2.</text>
</comment>
<comment type="subunit">
    <text evidence="1">Homotetramer.</text>
</comment>
<comment type="miscellaneous">
    <text evidence="1">CTPSs have evolved a hybrid strategy for distinguishing between UTP and CTP. The overlapping regions of the product feedback inhibitory and substrate sites recognize a common feature in both compounds, the triphosphate moiety. To differentiate isosteric substrate and product pyrimidine rings, an additional pocket far from the expected kinase/ligase catalytic site, specifically recognizes the cytosine and ribose portions of the product inhibitor.</text>
</comment>
<comment type="similarity">
    <text evidence="1">Belongs to the CTP synthase family.</text>
</comment>
<keyword id="KW-0067">ATP-binding</keyword>
<keyword id="KW-0315">Glutamine amidotransferase</keyword>
<keyword id="KW-0436">Ligase</keyword>
<keyword id="KW-0460">Magnesium</keyword>
<keyword id="KW-0479">Metal-binding</keyword>
<keyword id="KW-0547">Nucleotide-binding</keyword>
<keyword id="KW-0665">Pyrimidine biosynthesis</keyword>
<gene>
    <name evidence="1" type="primary">pyrG</name>
    <name type="ordered locus">Bcer98_3859</name>
</gene>
<reference key="1">
    <citation type="journal article" date="2008" name="Chem. Biol. Interact.">
        <title>Extending the Bacillus cereus group genomics to putative food-borne pathogens of different toxicity.</title>
        <authorList>
            <person name="Lapidus A."/>
            <person name="Goltsman E."/>
            <person name="Auger S."/>
            <person name="Galleron N."/>
            <person name="Segurens B."/>
            <person name="Dossat C."/>
            <person name="Land M.L."/>
            <person name="Broussolle V."/>
            <person name="Brillard J."/>
            <person name="Guinebretiere M.-H."/>
            <person name="Sanchis V."/>
            <person name="Nguen-the C."/>
            <person name="Lereclus D."/>
            <person name="Richardson P."/>
            <person name="Wincker P."/>
            <person name="Weissenbach J."/>
            <person name="Ehrlich S.D."/>
            <person name="Sorokin A."/>
        </authorList>
    </citation>
    <scope>NUCLEOTIDE SEQUENCE [LARGE SCALE GENOMIC DNA]</scope>
    <source>
        <strain>DSM 22905 / CIP 110041 / 391-98 / NVH 391-98</strain>
    </source>
</reference>
<dbReference type="EC" id="6.3.4.2" evidence="1"/>
<dbReference type="EMBL" id="CP000764">
    <property type="protein sequence ID" value="ABS24046.1"/>
    <property type="molecule type" value="Genomic_DNA"/>
</dbReference>
<dbReference type="RefSeq" id="WP_012096305.1">
    <property type="nucleotide sequence ID" value="NC_009674.1"/>
</dbReference>
<dbReference type="SMR" id="A7GV88"/>
<dbReference type="STRING" id="315749.Bcer98_3859"/>
<dbReference type="GeneID" id="33899098"/>
<dbReference type="KEGG" id="bcy:Bcer98_3859"/>
<dbReference type="eggNOG" id="COG0504">
    <property type="taxonomic scope" value="Bacteria"/>
</dbReference>
<dbReference type="HOGENOM" id="CLU_011675_5_0_9"/>
<dbReference type="OrthoDB" id="9801107at2"/>
<dbReference type="UniPathway" id="UPA00159">
    <property type="reaction ID" value="UER00277"/>
</dbReference>
<dbReference type="Proteomes" id="UP000002300">
    <property type="component" value="Chromosome"/>
</dbReference>
<dbReference type="GO" id="GO:0005829">
    <property type="term" value="C:cytosol"/>
    <property type="evidence" value="ECO:0007669"/>
    <property type="project" value="TreeGrafter"/>
</dbReference>
<dbReference type="GO" id="GO:0005524">
    <property type="term" value="F:ATP binding"/>
    <property type="evidence" value="ECO:0007669"/>
    <property type="project" value="UniProtKB-KW"/>
</dbReference>
<dbReference type="GO" id="GO:0003883">
    <property type="term" value="F:CTP synthase activity"/>
    <property type="evidence" value="ECO:0007669"/>
    <property type="project" value="UniProtKB-UniRule"/>
</dbReference>
<dbReference type="GO" id="GO:0004359">
    <property type="term" value="F:glutaminase activity"/>
    <property type="evidence" value="ECO:0007669"/>
    <property type="project" value="RHEA"/>
</dbReference>
<dbReference type="GO" id="GO:0042802">
    <property type="term" value="F:identical protein binding"/>
    <property type="evidence" value="ECO:0007669"/>
    <property type="project" value="TreeGrafter"/>
</dbReference>
<dbReference type="GO" id="GO:0046872">
    <property type="term" value="F:metal ion binding"/>
    <property type="evidence" value="ECO:0007669"/>
    <property type="project" value="UniProtKB-KW"/>
</dbReference>
<dbReference type="GO" id="GO:0044210">
    <property type="term" value="P:'de novo' CTP biosynthetic process"/>
    <property type="evidence" value="ECO:0007669"/>
    <property type="project" value="UniProtKB-UniRule"/>
</dbReference>
<dbReference type="GO" id="GO:0019856">
    <property type="term" value="P:pyrimidine nucleobase biosynthetic process"/>
    <property type="evidence" value="ECO:0007669"/>
    <property type="project" value="TreeGrafter"/>
</dbReference>
<dbReference type="CDD" id="cd03113">
    <property type="entry name" value="CTPS_N"/>
    <property type="match status" value="1"/>
</dbReference>
<dbReference type="CDD" id="cd01746">
    <property type="entry name" value="GATase1_CTP_Synthase"/>
    <property type="match status" value="1"/>
</dbReference>
<dbReference type="FunFam" id="3.40.50.300:FF:000009">
    <property type="entry name" value="CTP synthase"/>
    <property type="match status" value="1"/>
</dbReference>
<dbReference type="FunFam" id="3.40.50.880:FF:000002">
    <property type="entry name" value="CTP synthase"/>
    <property type="match status" value="1"/>
</dbReference>
<dbReference type="Gene3D" id="3.40.50.880">
    <property type="match status" value="1"/>
</dbReference>
<dbReference type="Gene3D" id="3.40.50.300">
    <property type="entry name" value="P-loop containing nucleotide triphosphate hydrolases"/>
    <property type="match status" value="1"/>
</dbReference>
<dbReference type="HAMAP" id="MF_01227">
    <property type="entry name" value="PyrG"/>
    <property type="match status" value="1"/>
</dbReference>
<dbReference type="InterPro" id="IPR029062">
    <property type="entry name" value="Class_I_gatase-like"/>
</dbReference>
<dbReference type="InterPro" id="IPR004468">
    <property type="entry name" value="CTP_synthase"/>
</dbReference>
<dbReference type="InterPro" id="IPR017456">
    <property type="entry name" value="CTP_synthase_N"/>
</dbReference>
<dbReference type="InterPro" id="IPR017926">
    <property type="entry name" value="GATASE"/>
</dbReference>
<dbReference type="InterPro" id="IPR033828">
    <property type="entry name" value="GATase1_CTP_Synthase"/>
</dbReference>
<dbReference type="InterPro" id="IPR027417">
    <property type="entry name" value="P-loop_NTPase"/>
</dbReference>
<dbReference type="NCBIfam" id="NF003792">
    <property type="entry name" value="PRK05380.1"/>
    <property type="match status" value="1"/>
</dbReference>
<dbReference type="NCBIfam" id="TIGR00337">
    <property type="entry name" value="PyrG"/>
    <property type="match status" value="1"/>
</dbReference>
<dbReference type="PANTHER" id="PTHR11550">
    <property type="entry name" value="CTP SYNTHASE"/>
    <property type="match status" value="1"/>
</dbReference>
<dbReference type="PANTHER" id="PTHR11550:SF0">
    <property type="entry name" value="CTP SYNTHASE-RELATED"/>
    <property type="match status" value="1"/>
</dbReference>
<dbReference type="Pfam" id="PF06418">
    <property type="entry name" value="CTP_synth_N"/>
    <property type="match status" value="1"/>
</dbReference>
<dbReference type="Pfam" id="PF00117">
    <property type="entry name" value="GATase"/>
    <property type="match status" value="1"/>
</dbReference>
<dbReference type="SUPFAM" id="SSF52317">
    <property type="entry name" value="Class I glutamine amidotransferase-like"/>
    <property type="match status" value="1"/>
</dbReference>
<dbReference type="SUPFAM" id="SSF52540">
    <property type="entry name" value="P-loop containing nucleoside triphosphate hydrolases"/>
    <property type="match status" value="1"/>
</dbReference>
<dbReference type="PROSITE" id="PS51273">
    <property type="entry name" value="GATASE_TYPE_1"/>
    <property type="match status" value="1"/>
</dbReference>
<proteinExistence type="inferred from homology"/>
<feature type="chain" id="PRO_1000139383" description="CTP synthase">
    <location>
        <begin position="1"/>
        <end position="535"/>
    </location>
</feature>
<feature type="domain" description="Glutamine amidotransferase type-1" evidence="1">
    <location>
        <begin position="292"/>
        <end position="534"/>
    </location>
</feature>
<feature type="region of interest" description="Amidoligase domain" evidence="1">
    <location>
        <begin position="1"/>
        <end position="267"/>
    </location>
</feature>
<feature type="active site" description="Nucleophile; for glutamine hydrolysis" evidence="1">
    <location>
        <position position="381"/>
    </location>
</feature>
<feature type="active site" evidence="1">
    <location>
        <position position="507"/>
    </location>
</feature>
<feature type="active site" evidence="1">
    <location>
        <position position="509"/>
    </location>
</feature>
<feature type="binding site" evidence="1">
    <location>
        <position position="13"/>
    </location>
    <ligand>
        <name>CTP</name>
        <dbReference type="ChEBI" id="CHEBI:37563"/>
        <note>allosteric inhibitor</note>
    </ligand>
</feature>
<feature type="binding site" evidence="1">
    <location>
        <position position="13"/>
    </location>
    <ligand>
        <name>UTP</name>
        <dbReference type="ChEBI" id="CHEBI:46398"/>
    </ligand>
</feature>
<feature type="binding site" evidence="1">
    <location>
        <begin position="14"/>
        <end position="19"/>
    </location>
    <ligand>
        <name>ATP</name>
        <dbReference type="ChEBI" id="CHEBI:30616"/>
    </ligand>
</feature>
<feature type="binding site" evidence="1">
    <location>
        <position position="54"/>
    </location>
    <ligand>
        <name>L-glutamine</name>
        <dbReference type="ChEBI" id="CHEBI:58359"/>
    </ligand>
</feature>
<feature type="binding site" evidence="1">
    <location>
        <position position="71"/>
    </location>
    <ligand>
        <name>ATP</name>
        <dbReference type="ChEBI" id="CHEBI:30616"/>
    </ligand>
</feature>
<feature type="binding site" evidence="1">
    <location>
        <position position="71"/>
    </location>
    <ligand>
        <name>Mg(2+)</name>
        <dbReference type="ChEBI" id="CHEBI:18420"/>
    </ligand>
</feature>
<feature type="binding site" evidence="1">
    <location>
        <position position="141"/>
    </location>
    <ligand>
        <name>Mg(2+)</name>
        <dbReference type="ChEBI" id="CHEBI:18420"/>
    </ligand>
</feature>
<feature type="binding site" evidence="1">
    <location>
        <begin position="148"/>
        <end position="150"/>
    </location>
    <ligand>
        <name>CTP</name>
        <dbReference type="ChEBI" id="CHEBI:37563"/>
        <note>allosteric inhibitor</note>
    </ligand>
</feature>
<feature type="binding site" evidence="1">
    <location>
        <begin position="188"/>
        <end position="193"/>
    </location>
    <ligand>
        <name>CTP</name>
        <dbReference type="ChEBI" id="CHEBI:37563"/>
        <note>allosteric inhibitor</note>
    </ligand>
</feature>
<feature type="binding site" evidence="1">
    <location>
        <begin position="188"/>
        <end position="193"/>
    </location>
    <ligand>
        <name>UTP</name>
        <dbReference type="ChEBI" id="CHEBI:46398"/>
    </ligand>
</feature>
<feature type="binding site" evidence="1">
    <location>
        <position position="224"/>
    </location>
    <ligand>
        <name>CTP</name>
        <dbReference type="ChEBI" id="CHEBI:37563"/>
        <note>allosteric inhibitor</note>
    </ligand>
</feature>
<feature type="binding site" evidence="1">
    <location>
        <position position="224"/>
    </location>
    <ligand>
        <name>UTP</name>
        <dbReference type="ChEBI" id="CHEBI:46398"/>
    </ligand>
</feature>
<feature type="binding site" evidence="1">
    <location>
        <position position="354"/>
    </location>
    <ligand>
        <name>L-glutamine</name>
        <dbReference type="ChEBI" id="CHEBI:58359"/>
    </ligand>
</feature>
<feature type="binding site" evidence="1">
    <location>
        <begin position="382"/>
        <end position="385"/>
    </location>
    <ligand>
        <name>L-glutamine</name>
        <dbReference type="ChEBI" id="CHEBI:58359"/>
    </ligand>
</feature>
<feature type="binding site" evidence="1">
    <location>
        <position position="405"/>
    </location>
    <ligand>
        <name>L-glutamine</name>
        <dbReference type="ChEBI" id="CHEBI:58359"/>
    </ligand>
</feature>
<feature type="binding site" evidence="1">
    <location>
        <position position="462"/>
    </location>
    <ligand>
        <name>L-glutamine</name>
        <dbReference type="ChEBI" id="CHEBI:58359"/>
    </ligand>
</feature>
<accession>A7GV88</accession>
<evidence type="ECO:0000255" key="1">
    <source>
        <dbReference type="HAMAP-Rule" id="MF_01227"/>
    </source>
</evidence>
<protein>
    <recommendedName>
        <fullName evidence="1">CTP synthase</fullName>
        <ecNumber evidence="1">6.3.4.2</ecNumber>
    </recommendedName>
    <alternativeName>
        <fullName evidence="1">Cytidine 5'-triphosphate synthase</fullName>
    </alternativeName>
    <alternativeName>
        <fullName evidence="1">Cytidine triphosphate synthetase</fullName>
        <shortName evidence="1">CTP synthetase</shortName>
        <shortName evidence="1">CTPS</shortName>
    </alternativeName>
    <alternativeName>
        <fullName evidence="1">UTP--ammonia ligase</fullName>
    </alternativeName>
</protein>
<name>PYRG_BACCN</name>
<organism>
    <name type="scientific">Bacillus cytotoxicus (strain DSM 22905 / CIP 110041 / 391-98 / NVH 391-98)</name>
    <dbReference type="NCBI Taxonomy" id="315749"/>
    <lineage>
        <taxon>Bacteria</taxon>
        <taxon>Bacillati</taxon>
        <taxon>Bacillota</taxon>
        <taxon>Bacilli</taxon>
        <taxon>Bacillales</taxon>
        <taxon>Bacillaceae</taxon>
        <taxon>Bacillus</taxon>
        <taxon>Bacillus cereus group</taxon>
    </lineage>
</organism>